<accession>Q2YYM3</accession>
<organism>
    <name type="scientific">Staphylococcus aureus (strain bovine RF122 / ET3-1)</name>
    <dbReference type="NCBI Taxonomy" id="273036"/>
    <lineage>
        <taxon>Bacteria</taxon>
        <taxon>Bacillati</taxon>
        <taxon>Bacillota</taxon>
        <taxon>Bacilli</taxon>
        <taxon>Bacillales</taxon>
        <taxon>Staphylococcaceae</taxon>
        <taxon>Staphylococcus</taxon>
    </lineage>
</organism>
<gene>
    <name evidence="1" type="primary">rplQ</name>
    <name type="ordered locus">SAB2096c</name>
</gene>
<feature type="chain" id="PRO_1000055951" description="Large ribosomal subunit protein bL17">
    <location>
        <begin position="1"/>
        <end position="122"/>
    </location>
</feature>
<sequence>MGYRKLGRTSDQRKAMLRDLATSLIISERIETTEARAKEVRSVVEKLITLGKKGDLASRRNAAKTLRNVEILNEDETTQTALQKLFGEIAERYTERQGGYTRILKQGPRRGDGAESVIIELV</sequence>
<keyword id="KW-0002">3D-structure</keyword>
<keyword id="KW-0687">Ribonucleoprotein</keyword>
<keyword id="KW-0689">Ribosomal protein</keyword>
<dbReference type="EMBL" id="AJ938182">
    <property type="protein sequence ID" value="CAI81785.1"/>
    <property type="molecule type" value="Genomic_DNA"/>
</dbReference>
<dbReference type="RefSeq" id="WP_000542274.1">
    <property type="nucleotide sequence ID" value="NC_007622.1"/>
</dbReference>
<dbReference type="PDB" id="6FXC">
    <property type="method" value="EM"/>
    <property type="resolution" value="6.76 A"/>
    <property type="chains" value="AL/BL=3-122"/>
</dbReference>
<dbReference type="PDBsum" id="6FXC"/>
<dbReference type="EMDB" id="EMD-0243"/>
<dbReference type="EMDB" id="EMD-3637"/>
<dbReference type="SMR" id="Q2YYM3"/>
<dbReference type="GeneID" id="98346535"/>
<dbReference type="KEGG" id="sab:SAB2096c"/>
<dbReference type="HOGENOM" id="CLU_074407_2_2_9"/>
<dbReference type="GO" id="GO:0022625">
    <property type="term" value="C:cytosolic large ribosomal subunit"/>
    <property type="evidence" value="ECO:0007669"/>
    <property type="project" value="TreeGrafter"/>
</dbReference>
<dbReference type="GO" id="GO:0003735">
    <property type="term" value="F:structural constituent of ribosome"/>
    <property type="evidence" value="ECO:0007669"/>
    <property type="project" value="InterPro"/>
</dbReference>
<dbReference type="GO" id="GO:0006412">
    <property type="term" value="P:translation"/>
    <property type="evidence" value="ECO:0007669"/>
    <property type="project" value="UniProtKB-UniRule"/>
</dbReference>
<dbReference type="FunFam" id="3.90.1030.10:FF:000002">
    <property type="entry name" value="50S ribosomal protein L17"/>
    <property type="match status" value="1"/>
</dbReference>
<dbReference type="Gene3D" id="3.90.1030.10">
    <property type="entry name" value="Ribosomal protein L17"/>
    <property type="match status" value="1"/>
</dbReference>
<dbReference type="HAMAP" id="MF_01368">
    <property type="entry name" value="Ribosomal_bL17"/>
    <property type="match status" value="1"/>
</dbReference>
<dbReference type="InterPro" id="IPR000456">
    <property type="entry name" value="Ribosomal_bL17"/>
</dbReference>
<dbReference type="InterPro" id="IPR047859">
    <property type="entry name" value="Ribosomal_bL17_CS"/>
</dbReference>
<dbReference type="InterPro" id="IPR036373">
    <property type="entry name" value="Ribosomal_bL17_sf"/>
</dbReference>
<dbReference type="NCBIfam" id="TIGR00059">
    <property type="entry name" value="L17"/>
    <property type="match status" value="1"/>
</dbReference>
<dbReference type="PANTHER" id="PTHR14413:SF16">
    <property type="entry name" value="LARGE RIBOSOMAL SUBUNIT PROTEIN BL17M"/>
    <property type="match status" value="1"/>
</dbReference>
<dbReference type="PANTHER" id="PTHR14413">
    <property type="entry name" value="RIBOSOMAL PROTEIN L17"/>
    <property type="match status" value="1"/>
</dbReference>
<dbReference type="Pfam" id="PF01196">
    <property type="entry name" value="Ribosomal_L17"/>
    <property type="match status" value="1"/>
</dbReference>
<dbReference type="SUPFAM" id="SSF64263">
    <property type="entry name" value="Prokaryotic ribosomal protein L17"/>
    <property type="match status" value="1"/>
</dbReference>
<dbReference type="PROSITE" id="PS01167">
    <property type="entry name" value="RIBOSOMAL_L17"/>
    <property type="match status" value="1"/>
</dbReference>
<protein>
    <recommendedName>
        <fullName evidence="1">Large ribosomal subunit protein bL17</fullName>
    </recommendedName>
    <alternativeName>
        <fullName evidence="2">50S ribosomal protein L17</fullName>
    </alternativeName>
</protein>
<name>RL17_STAAB</name>
<comment type="subunit">
    <text evidence="1">Part of the 50S ribosomal subunit. Contacts protein L32.</text>
</comment>
<comment type="similarity">
    <text evidence="1">Belongs to the bacterial ribosomal protein bL17 family.</text>
</comment>
<evidence type="ECO:0000255" key="1">
    <source>
        <dbReference type="HAMAP-Rule" id="MF_01368"/>
    </source>
</evidence>
<evidence type="ECO:0000305" key="2"/>
<proteinExistence type="evidence at protein level"/>
<reference key="1">
    <citation type="journal article" date="2007" name="PLoS ONE">
        <title>Molecular correlates of host specialization in Staphylococcus aureus.</title>
        <authorList>
            <person name="Herron-Olson L."/>
            <person name="Fitzgerald J.R."/>
            <person name="Musser J.M."/>
            <person name="Kapur V."/>
        </authorList>
    </citation>
    <scope>NUCLEOTIDE SEQUENCE [LARGE SCALE GENOMIC DNA]</scope>
    <source>
        <strain>bovine RF122 / ET3-1</strain>
    </source>
</reference>